<feature type="chain" id="PRO_0000346607" description="Urease accessory protein UreD 1">
    <location>
        <begin position="1"/>
        <end position="255"/>
    </location>
</feature>
<sequence>MTGPPAPAARPAEPDDPTVVAVERDASGRHLARELSPGAFLAPRPLLPCADRLRIALVGTRAGLLAGDDLRLHVSVGPGARLDLVEPSGLVAYDHRGGRSAWRARIDIAAGGRLDWDGKPFVVAHGAWVDRTMEVTLAPGARMLWRDTLVLGRSGERGGRVRTRTRAEYDGRELLVEDLDLTDPDIRELPGVLGPNRIVGSVTALGTRPPGPPHPYRTDLAGPGAQVRLLDTEAPAMEAELSALCEHWRTENDHA</sequence>
<dbReference type="EMBL" id="AP009493">
    <property type="protein sequence ID" value="BAG17062.1"/>
    <property type="molecule type" value="Genomic_DNA"/>
</dbReference>
<dbReference type="RefSeq" id="WP_012377636.1">
    <property type="nucleotide sequence ID" value="NC_010572.1"/>
</dbReference>
<dbReference type="SMR" id="B1VNN9"/>
<dbReference type="KEGG" id="sgr:SGR_233"/>
<dbReference type="PATRIC" id="fig|455632.4.peg.212"/>
<dbReference type="eggNOG" id="COG0829">
    <property type="taxonomic scope" value="Bacteria"/>
</dbReference>
<dbReference type="HOGENOM" id="CLU_089314_0_0_11"/>
<dbReference type="Proteomes" id="UP000001685">
    <property type="component" value="Chromosome"/>
</dbReference>
<dbReference type="GO" id="GO:0005737">
    <property type="term" value="C:cytoplasm"/>
    <property type="evidence" value="ECO:0007669"/>
    <property type="project" value="UniProtKB-SubCell"/>
</dbReference>
<dbReference type="GO" id="GO:0016151">
    <property type="term" value="F:nickel cation binding"/>
    <property type="evidence" value="ECO:0007669"/>
    <property type="project" value="UniProtKB-UniRule"/>
</dbReference>
<dbReference type="HAMAP" id="MF_01384">
    <property type="entry name" value="UreD"/>
    <property type="match status" value="1"/>
</dbReference>
<dbReference type="InterPro" id="IPR002669">
    <property type="entry name" value="UreD"/>
</dbReference>
<dbReference type="Pfam" id="PF01774">
    <property type="entry name" value="UreD"/>
    <property type="match status" value="1"/>
</dbReference>
<keyword id="KW-0143">Chaperone</keyword>
<keyword id="KW-0963">Cytoplasm</keyword>
<keyword id="KW-0996">Nickel insertion</keyword>
<comment type="function">
    <text evidence="1">Required for maturation of urease via the functional incorporation of the urease nickel metallocenter.</text>
</comment>
<comment type="subunit">
    <text evidence="1">UreD, UreF and UreG form a complex that acts as a GTP-hydrolysis-dependent molecular chaperone, activating the urease apoprotein by helping to assemble the nickel containing metallocenter of UreC. The UreE protein probably delivers the nickel.</text>
</comment>
<comment type="subcellular location">
    <subcellularLocation>
        <location evidence="1">Cytoplasm</location>
    </subcellularLocation>
</comment>
<comment type="similarity">
    <text evidence="1">Belongs to the UreD family.</text>
</comment>
<organism>
    <name type="scientific">Streptomyces griseus subsp. griseus (strain JCM 4626 / CBS 651.72 / NBRC 13350 / KCC S-0626 / ISP 5235)</name>
    <dbReference type="NCBI Taxonomy" id="455632"/>
    <lineage>
        <taxon>Bacteria</taxon>
        <taxon>Bacillati</taxon>
        <taxon>Actinomycetota</taxon>
        <taxon>Actinomycetes</taxon>
        <taxon>Kitasatosporales</taxon>
        <taxon>Streptomycetaceae</taxon>
        <taxon>Streptomyces</taxon>
    </lineage>
</organism>
<gene>
    <name evidence="1" type="primary">ureD1</name>
    <name type="ordered locus">SGR_233</name>
</gene>
<proteinExistence type="inferred from homology"/>
<protein>
    <recommendedName>
        <fullName evidence="1">Urease accessory protein UreD 1</fullName>
    </recommendedName>
</protein>
<reference key="1">
    <citation type="journal article" date="2008" name="J. Bacteriol.">
        <title>Genome sequence of the streptomycin-producing microorganism Streptomyces griseus IFO 13350.</title>
        <authorList>
            <person name="Ohnishi Y."/>
            <person name="Ishikawa J."/>
            <person name="Hara H."/>
            <person name="Suzuki H."/>
            <person name="Ikenoya M."/>
            <person name="Ikeda H."/>
            <person name="Yamashita A."/>
            <person name="Hattori M."/>
            <person name="Horinouchi S."/>
        </authorList>
    </citation>
    <scope>NUCLEOTIDE SEQUENCE [LARGE SCALE GENOMIC DNA]</scope>
    <source>
        <strain>JCM 4626 / CBS 651.72 / NBRC 13350 / KCC S-0626 / ISP 5235</strain>
    </source>
</reference>
<name>URED1_STRGG</name>
<accession>B1VNN9</accession>
<evidence type="ECO:0000255" key="1">
    <source>
        <dbReference type="HAMAP-Rule" id="MF_01384"/>
    </source>
</evidence>